<gene>
    <name evidence="1" type="primary">ung</name>
    <name type="ordered locus">XOO4297</name>
</gene>
<proteinExistence type="inferred from homology"/>
<protein>
    <recommendedName>
        <fullName evidence="1">Uracil-DNA glycosylase</fullName>
        <shortName evidence="1">UDG</shortName>
        <ecNumber evidence="1">3.2.2.27</ecNumber>
    </recommendedName>
</protein>
<sequence>MTEVEARIQLEPSWKAKVGDWLLCSQMQELSAFLRQRKAVGARVFPPGPQIFAAFDATPFDQVKVVILGQDPYHGEGQAHGLCFSVLPGVPVPPSLLNIYKEIQDDLGIARPDHGYLMPWARQGVLLLNAVLTVEQGRAGAHQNKGWEGFTDHVVETLNREREGLVFLLWGSYAQSKGRVIDQARHRVFKAPHPSPLSAHRGFLGCQHFSKTNAHLQRRGISPIDWSLPPRNELDTTSAGA</sequence>
<reference key="1">
    <citation type="journal article" date="2005" name="Nucleic Acids Res.">
        <title>The genome sequence of Xanthomonas oryzae pathovar oryzae KACC10331, the bacterial blight pathogen of rice.</title>
        <authorList>
            <person name="Lee B.-M."/>
            <person name="Park Y.-J."/>
            <person name="Park D.-S."/>
            <person name="Kang H.-W."/>
            <person name="Kim J.-G."/>
            <person name="Song E.-S."/>
            <person name="Park I.-C."/>
            <person name="Yoon U.-H."/>
            <person name="Hahn J.-H."/>
            <person name="Koo B.-S."/>
            <person name="Lee G.-B."/>
            <person name="Kim H."/>
            <person name="Park H.-S."/>
            <person name="Yoon K.-O."/>
            <person name="Kim J.-H."/>
            <person name="Jung C.-H."/>
            <person name="Koh N.-H."/>
            <person name="Seo J.-S."/>
            <person name="Go S.-J."/>
        </authorList>
    </citation>
    <scope>NUCLEOTIDE SEQUENCE [LARGE SCALE GENOMIC DNA]</scope>
    <source>
        <strain>KACC10331 / KXO85</strain>
    </source>
</reference>
<accession>Q5GUS2</accession>
<evidence type="ECO:0000255" key="1">
    <source>
        <dbReference type="HAMAP-Rule" id="MF_00148"/>
    </source>
</evidence>
<evidence type="ECO:0000256" key="2">
    <source>
        <dbReference type="SAM" id="MobiDB-lite"/>
    </source>
</evidence>
<organism>
    <name type="scientific">Xanthomonas oryzae pv. oryzae (strain KACC10331 / KXO85)</name>
    <dbReference type="NCBI Taxonomy" id="291331"/>
    <lineage>
        <taxon>Bacteria</taxon>
        <taxon>Pseudomonadati</taxon>
        <taxon>Pseudomonadota</taxon>
        <taxon>Gammaproteobacteria</taxon>
        <taxon>Lysobacterales</taxon>
        <taxon>Lysobacteraceae</taxon>
        <taxon>Xanthomonas</taxon>
    </lineage>
</organism>
<dbReference type="EC" id="3.2.2.27" evidence="1"/>
<dbReference type="EMBL" id="AE013598">
    <property type="protein sequence ID" value="AAW77551.1"/>
    <property type="molecule type" value="Genomic_DNA"/>
</dbReference>
<dbReference type="SMR" id="Q5GUS2"/>
<dbReference type="STRING" id="291331.XOO4297"/>
<dbReference type="KEGG" id="xoo:XOO4297"/>
<dbReference type="PATRIC" id="fig|291331.8.peg.4771"/>
<dbReference type="HOGENOM" id="CLU_032162_3_1_6"/>
<dbReference type="Proteomes" id="UP000006735">
    <property type="component" value="Chromosome"/>
</dbReference>
<dbReference type="GO" id="GO:0005737">
    <property type="term" value="C:cytoplasm"/>
    <property type="evidence" value="ECO:0007669"/>
    <property type="project" value="UniProtKB-SubCell"/>
</dbReference>
<dbReference type="GO" id="GO:0004844">
    <property type="term" value="F:uracil DNA N-glycosylase activity"/>
    <property type="evidence" value="ECO:0007669"/>
    <property type="project" value="UniProtKB-UniRule"/>
</dbReference>
<dbReference type="GO" id="GO:0097510">
    <property type="term" value="P:base-excision repair, AP site formation via deaminated base removal"/>
    <property type="evidence" value="ECO:0007669"/>
    <property type="project" value="TreeGrafter"/>
</dbReference>
<dbReference type="CDD" id="cd10027">
    <property type="entry name" value="UDG-F1-like"/>
    <property type="match status" value="1"/>
</dbReference>
<dbReference type="FunFam" id="3.40.470.10:FF:000001">
    <property type="entry name" value="Uracil-DNA glycosylase"/>
    <property type="match status" value="1"/>
</dbReference>
<dbReference type="Gene3D" id="3.40.470.10">
    <property type="entry name" value="Uracil-DNA glycosylase-like domain"/>
    <property type="match status" value="1"/>
</dbReference>
<dbReference type="HAMAP" id="MF_00148">
    <property type="entry name" value="UDG"/>
    <property type="match status" value="1"/>
</dbReference>
<dbReference type="InterPro" id="IPR002043">
    <property type="entry name" value="UDG_fam1"/>
</dbReference>
<dbReference type="InterPro" id="IPR018085">
    <property type="entry name" value="Ura-DNA_Glyclase_AS"/>
</dbReference>
<dbReference type="InterPro" id="IPR005122">
    <property type="entry name" value="Uracil-DNA_glycosylase-like"/>
</dbReference>
<dbReference type="InterPro" id="IPR036895">
    <property type="entry name" value="Uracil-DNA_glycosylase-like_sf"/>
</dbReference>
<dbReference type="NCBIfam" id="NF003588">
    <property type="entry name" value="PRK05254.1-1"/>
    <property type="match status" value="1"/>
</dbReference>
<dbReference type="NCBIfam" id="NF003589">
    <property type="entry name" value="PRK05254.1-2"/>
    <property type="match status" value="1"/>
</dbReference>
<dbReference type="NCBIfam" id="NF003591">
    <property type="entry name" value="PRK05254.1-4"/>
    <property type="match status" value="1"/>
</dbReference>
<dbReference type="NCBIfam" id="NF003592">
    <property type="entry name" value="PRK05254.1-5"/>
    <property type="match status" value="1"/>
</dbReference>
<dbReference type="NCBIfam" id="TIGR00628">
    <property type="entry name" value="ung"/>
    <property type="match status" value="1"/>
</dbReference>
<dbReference type="PANTHER" id="PTHR11264">
    <property type="entry name" value="URACIL-DNA GLYCOSYLASE"/>
    <property type="match status" value="1"/>
</dbReference>
<dbReference type="PANTHER" id="PTHR11264:SF0">
    <property type="entry name" value="URACIL-DNA GLYCOSYLASE"/>
    <property type="match status" value="1"/>
</dbReference>
<dbReference type="Pfam" id="PF03167">
    <property type="entry name" value="UDG"/>
    <property type="match status" value="1"/>
</dbReference>
<dbReference type="SMART" id="SM00986">
    <property type="entry name" value="UDG"/>
    <property type="match status" value="1"/>
</dbReference>
<dbReference type="SMART" id="SM00987">
    <property type="entry name" value="UreE_C"/>
    <property type="match status" value="1"/>
</dbReference>
<dbReference type="SUPFAM" id="SSF52141">
    <property type="entry name" value="Uracil-DNA glycosylase-like"/>
    <property type="match status" value="1"/>
</dbReference>
<dbReference type="PROSITE" id="PS00130">
    <property type="entry name" value="U_DNA_GLYCOSYLASE"/>
    <property type="match status" value="1"/>
</dbReference>
<name>UNG_XANOR</name>
<feature type="chain" id="PRO_1000009965" description="Uracil-DNA glycosylase">
    <location>
        <begin position="1"/>
        <end position="241"/>
    </location>
</feature>
<feature type="region of interest" description="Disordered" evidence="2">
    <location>
        <begin position="221"/>
        <end position="241"/>
    </location>
</feature>
<feature type="active site" description="Proton acceptor" evidence="1">
    <location>
        <position position="71"/>
    </location>
</feature>
<keyword id="KW-0963">Cytoplasm</keyword>
<keyword id="KW-0227">DNA damage</keyword>
<keyword id="KW-0234">DNA repair</keyword>
<keyword id="KW-0378">Hydrolase</keyword>
<keyword id="KW-1185">Reference proteome</keyword>
<comment type="function">
    <text evidence="1">Excises uracil residues from the DNA which can arise as a result of misincorporation of dUMP residues by DNA polymerase or due to deamination of cytosine.</text>
</comment>
<comment type="catalytic activity">
    <reaction evidence="1">
        <text>Hydrolyzes single-stranded DNA or mismatched double-stranded DNA and polynucleotides, releasing free uracil.</text>
        <dbReference type="EC" id="3.2.2.27"/>
    </reaction>
</comment>
<comment type="subcellular location">
    <subcellularLocation>
        <location evidence="1">Cytoplasm</location>
    </subcellularLocation>
</comment>
<comment type="similarity">
    <text evidence="1">Belongs to the uracil-DNA glycosylase (UDG) superfamily. UNG family.</text>
</comment>